<proteinExistence type="evidence at protein level"/>
<accession>P02771</accession>
<accession>B2RBU3</accession>
<reference key="1">
    <citation type="journal article" date="1983" name="Proc. Natl. Acad. Sci. U.S.A.">
        <title>Primary structures of human alpha-fetoprotein and its mRNA.</title>
        <authorList>
            <person name="Morinaga T."/>
            <person name="Sakai M."/>
            <person name="Wegmann T.G."/>
            <person name="Tamaoki T."/>
        </authorList>
    </citation>
    <scope>NUCLEOTIDE SEQUENCE [MRNA]</scope>
</reference>
<reference key="2">
    <citation type="journal article" date="1987" name="Biochemistry">
        <title>Structure, polymorphism, and novel repeated DNA elements revealed by a complete sequence of the human alpha-fetoprotein gene.</title>
        <authorList>
            <person name="Gibbs P.E.M."/>
            <person name="Zielinski R."/>
            <person name="Boyd C."/>
            <person name="Dugaiczyk A."/>
        </authorList>
    </citation>
    <scope>NUCLEOTIDE SEQUENCE [GENOMIC DNA]</scope>
</reference>
<reference key="3">
    <citation type="journal article" date="2004" name="Nat. Genet.">
        <title>Complete sequencing and characterization of 21,243 full-length human cDNAs.</title>
        <authorList>
            <person name="Ota T."/>
            <person name="Suzuki Y."/>
            <person name="Nishikawa T."/>
            <person name="Otsuki T."/>
            <person name="Sugiyama T."/>
            <person name="Irie R."/>
            <person name="Wakamatsu A."/>
            <person name="Hayashi K."/>
            <person name="Sato H."/>
            <person name="Nagai K."/>
            <person name="Kimura K."/>
            <person name="Makita H."/>
            <person name="Sekine M."/>
            <person name="Obayashi M."/>
            <person name="Nishi T."/>
            <person name="Shibahara T."/>
            <person name="Tanaka T."/>
            <person name="Ishii S."/>
            <person name="Yamamoto J."/>
            <person name="Saito K."/>
            <person name="Kawai Y."/>
            <person name="Isono Y."/>
            <person name="Nakamura Y."/>
            <person name="Nagahari K."/>
            <person name="Murakami K."/>
            <person name="Yasuda T."/>
            <person name="Iwayanagi T."/>
            <person name="Wagatsuma M."/>
            <person name="Shiratori A."/>
            <person name="Sudo H."/>
            <person name="Hosoiri T."/>
            <person name="Kaku Y."/>
            <person name="Kodaira H."/>
            <person name="Kondo H."/>
            <person name="Sugawara M."/>
            <person name="Takahashi M."/>
            <person name="Kanda K."/>
            <person name="Yokoi T."/>
            <person name="Furuya T."/>
            <person name="Kikkawa E."/>
            <person name="Omura Y."/>
            <person name="Abe K."/>
            <person name="Kamihara K."/>
            <person name="Katsuta N."/>
            <person name="Sato K."/>
            <person name="Tanikawa M."/>
            <person name="Yamazaki M."/>
            <person name="Ninomiya K."/>
            <person name="Ishibashi T."/>
            <person name="Yamashita H."/>
            <person name="Murakawa K."/>
            <person name="Fujimori K."/>
            <person name="Tanai H."/>
            <person name="Kimata M."/>
            <person name="Watanabe M."/>
            <person name="Hiraoka S."/>
            <person name="Chiba Y."/>
            <person name="Ishida S."/>
            <person name="Ono Y."/>
            <person name="Takiguchi S."/>
            <person name="Watanabe S."/>
            <person name="Yosida M."/>
            <person name="Hotuta T."/>
            <person name="Kusano J."/>
            <person name="Kanehori K."/>
            <person name="Takahashi-Fujii A."/>
            <person name="Hara H."/>
            <person name="Tanase T.-O."/>
            <person name="Nomura Y."/>
            <person name="Togiya S."/>
            <person name="Komai F."/>
            <person name="Hara R."/>
            <person name="Takeuchi K."/>
            <person name="Arita M."/>
            <person name="Imose N."/>
            <person name="Musashino K."/>
            <person name="Yuuki H."/>
            <person name="Oshima A."/>
            <person name="Sasaki N."/>
            <person name="Aotsuka S."/>
            <person name="Yoshikawa Y."/>
            <person name="Matsunawa H."/>
            <person name="Ichihara T."/>
            <person name="Shiohata N."/>
            <person name="Sano S."/>
            <person name="Moriya S."/>
            <person name="Momiyama H."/>
            <person name="Satoh N."/>
            <person name="Takami S."/>
            <person name="Terashima Y."/>
            <person name="Suzuki O."/>
            <person name="Nakagawa S."/>
            <person name="Senoh A."/>
            <person name="Mizoguchi H."/>
            <person name="Goto Y."/>
            <person name="Shimizu F."/>
            <person name="Wakebe H."/>
            <person name="Hishigaki H."/>
            <person name="Watanabe T."/>
            <person name="Sugiyama A."/>
            <person name="Takemoto M."/>
            <person name="Kawakami B."/>
            <person name="Yamazaki M."/>
            <person name="Watanabe K."/>
            <person name="Kumagai A."/>
            <person name="Itakura S."/>
            <person name="Fukuzumi Y."/>
            <person name="Fujimori Y."/>
            <person name="Komiyama M."/>
            <person name="Tashiro H."/>
            <person name="Tanigami A."/>
            <person name="Fujiwara T."/>
            <person name="Ono T."/>
            <person name="Yamada K."/>
            <person name="Fujii Y."/>
            <person name="Ozaki K."/>
            <person name="Hirao M."/>
            <person name="Ohmori Y."/>
            <person name="Kawabata A."/>
            <person name="Hikiji T."/>
            <person name="Kobatake N."/>
            <person name="Inagaki H."/>
            <person name="Ikema Y."/>
            <person name="Okamoto S."/>
            <person name="Okitani R."/>
            <person name="Kawakami T."/>
            <person name="Noguchi S."/>
            <person name="Itoh T."/>
            <person name="Shigeta K."/>
            <person name="Senba T."/>
            <person name="Matsumura K."/>
            <person name="Nakajima Y."/>
            <person name="Mizuno T."/>
            <person name="Morinaga M."/>
            <person name="Sasaki M."/>
            <person name="Togashi T."/>
            <person name="Oyama M."/>
            <person name="Hata H."/>
            <person name="Watanabe M."/>
            <person name="Komatsu T."/>
            <person name="Mizushima-Sugano J."/>
            <person name="Satoh T."/>
            <person name="Shirai Y."/>
            <person name="Takahashi Y."/>
            <person name="Nakagawa K."/>
            <person name="Okumura K."/>
            <person name="Nagase T."/>
            <person name="Nomura N."/>
            <person name="Kikuchi H."/>
            <person name="Masuho Y."/>
            <person name="Yamashita R."/>
            <person name="Nakai K."/>
            <person name="Yada T."/>
            <person name="Nakamura Y."/>
            <person name="Ohara O."/>
            <person name="Isogai T."/>
            <person name="Sugano S."/>
        </authorList>
    </citation>
    <scope>NUCLEOTIDE SEQUENCE [LARGE SCALE MRNA]</scope>
    <scope>VARIANT GLY-570</scope>
    <source>
        <tissue>Heart</tissue>
    </source>
</reference>
<reference key="4">
    <citation type="journal article" date="2004" name="Genome Res.">
        <title>The status, quality, and expansion of the NIH full-length cDNA project: the Mammalian Gene Collection (MGC).</title>
        <authorList>
            <consortium name="The MGC Project Team"/>
        </authorList>
    </citation>
    <scope>NUCLEOTIDE SEQUENCE [LARGE SCALE MRNA]</scope>
    <source>
        <tissue>Lung</tissue>
    </source>
</reference>
<reference key="5">
    <citation type="journal article" date="1985" name="J. Biol. Chem.">
        <title>The human alpha-fetoprotein gene. Sequence organization and the 5' flanking region.</title>
        <authorList>
            <person name="Sakai M."/>
            <person name="Morinaga T."/>
            <person name="Urano Y."/>
            <person name="Watanabe K."/>
            <person name="Wegmann T.G."/>
            <person name="Tamaoki T."/>
        </authorList>
    </citation>
    <scope>NUCLEOTIDE SEQUENCE [GENOMIC DNA] OF 1-28 AND 596-609</scope>
    <scope>GENE STRUCTURE</scope>
</reference>
<reference key="6">
    <citation type="journal article" date="1993" name="Hum. Mol. Genet.">
        <title>A G--&gt;A substitution in an HNF I binding site in the human alpha-fetoprotein gene is associated with hereditary persistence of alpha-fetoprotein (HPAFP).</title>
        <authorList>
            <person name="McVey J.H."/>
            <person name="Michaelides K."/>
            <person name="Hansen L.P."/>
            <person name="Ferguson-Smith M."/>
            <person name="Tilghman S."/>
            <person name="Krumlauf R."/>
            <person name="Tuddenham E.G.D."/>
        </authorList>
    </citation>
    <scope>NUCLEOTIDE SEQUENCE [GENOMIC DNA] OF 1-28</scope>
    <scope>INVOLVEMENT IN HPAFP</scope>
</reference>
<reference key="7">
    <citation type="submission" date="2007-03" db="UniProtKB">
        <authorList>
            <person name="Lubec G."/>
            <person name="Vishwanath V."/>
        </authorList>
    </citation>
    <scope>PROTEIN SEQUENCE OF 311-332; 348-372 AND 422-437</scope>
    <scope>IDENTIFICATION BY MASS SPECTROMETRY</scope>
    <source>
        <tissue>Brain</tissue>
        <tissue>Cajal-Retzius cell</tissue>
    </source>
</reference>
<reference key="8">
    <citation type="journal article" date="1982" name="Gene">
        <title>Structure and evolution of human alpha-fetoprotein deduced from partial sequence of cloned cDNA.</title>
        <authorList>
            <person name="Beattie W.G."/>
            <person name="Dugaiczyk A."/>
        </authorList>
    </citation>
    <scope>NUCLEOTIDE SEQUENCE [MRNA] OF 429-556</scope>
</reference>
<reference key="9">
    <citation type="journal article" date="1991" name="Biochemistry">
        <title>Human alpha-fetoprotein primary structure: a mass spectrometric study.</title>
        <authorList>
            <person name="Pucci P."/>
            <person name="Siciliano R."/>
            <person name="Malorni A."/>
            <person name="Marino G."/>
            <person name="Tecce M.F."/>
            <person name="Ceccarini C."/>
            <person name="Terrana B."/>
        </authorList>
    </citation>
    <scope>PROTEIN SEQUENCE OF 19-609</scope>
</reference>
<reference key="10">
    <citation type="journal article" date="1977" name="Biochim. Biophys. Acta">
        <title>Studies on human alpha-fetoprotein. Isolation and characterization of monomeric and polymeric forms and amino-terminal sequence analysis.</title>
        <authorList>
            <person name="Yachnin S."/>
            <person name="Hsu R."/>
            <person name="Heinrikson R.L."/>
            <person name="Miller J.B."/>
        </authorList>
    </citation>
    <scope>PRELIMINARY PROTEIN SEQUENCE OF 19-35</scope>
</reference>
<reference key="11">
    <citation type="journal article" date="1977" name="Cancer Res.">
        <title>Comparative chemical structures of human alpha-fetoproteins from fetal serum and from ascites fluid of a patient with hepatoma.</title>
        <authorList>
            <person name="Aoyagi Y."/>
            <person name="Ikenaka T."/>
            <person name="Ichida F."/>
        </authorList>
    </citation>
    <scope>PRELIMINARY PROTEIN SEQUENCE OF 19-38</scope>
</reference>
<reference key="12">
    <citation type="journal article" date="1974" name="Johns Hopkins Med. J. Suppl.">
        <title>Alpha fetoprotein: structure and expression in man and inbred mouse strains under normal conditions and liver injury.</title>
        <authorList>
            <person name="Ruoslahti E."/>
            <person name="Pihko H."/>
            <person name="Vaheri A."/>
            <person name="Seppala M."/>
            <person name="Virolainen M."/>
            <person name="Konttinen A."/>
        </authorList>
    </citation>
    <scope>PRELIMINARY PROTEIN SEQUENCE OF 19-39</scope>
</reference>
<reference key="13">
    <citation type="journal article" date="1978" name="Cancer Res.">
        <title>Copper(II)-binding ability of human alpha-fetoprotein.</title>
        <authorList>
            <person name="Aoyagi Y."/>
            <person name="Ikenaka T."/>
            <person name="Ichida F."/>
        </authorList>
    </citation>
    <scope>METAL-BINDING</scope>
</reference>
<reference key="14">
    <citation type="journal article" date="1979" name="Cancer Res.">
        <title>Alpha-fetoprotein as a carrier protein in plasma and its bilirubin-binding ability.</title>
        <authorList>
            <person name="Aoyagi Y."/>
            <person name="Ikenaka T."/>
            <person name="Ichida F."/>
        </authorList>
    </citation>
    <scope>BILIRUBIN-BINDING</scope>
</reference>
<reference key="15">
    <citation type="journal article" date="1985" name="Proc. Natl. Acad. Sci. U.S.A.">
        <title>Tyrosine sulfation of proteins from the human hepatoma cell line HepG2.</title>
        <authorList>
            <person name="Liu M.C."/>
            <person name="Yu S."/>
            <person name="Sy J."/>
            <person name="Redman C.M."/>
            <person name="Lipmann F."/>
        </authorList>
    </citation>
    <scope>SULFATION</scope>
</reference>
<reference key="16">
    <citation type="journal article" date="2004" name="Eur. J. Hum. Genet.">
        <title>Congenital deficiency of alpha feto-protein.</title>
        <authorList>
            <person name="Sharony R."/>
            <person name="Zadik I."/>
            <person name="Parvari R."/>
        </authorList>
    </citation>
    <scope>INVOLVEMENT IN AFPD</scope>
</reference>
<reference key="17">
    <citation type="journal article" date="2009" name="Eur. J. Hum. Genet.">
        <title>A new mutation in the AFP gene responsible for a total absence of alpha feto-protein on second trimester maternal serum screening for Down syndrome.</title>
        <authorList>
            <person name="Petit F.M."/>
            <person name="Hebert M."/>
            <person name="Picone O."/>
            <person name="Brisset S."/>
            <person name="Maurin M.L."/>
            <person name="Parisot F."/>
            <person name="Capel L."/>
            <person name="Benattar C."/>
            <person name="Senat M.V."/>
            <person name="Tachdjian G."/>
            <person name="Labrune P."/>
        </authorList>
    </citation>
    <scope>INVOLVEMENT IN AFPD</scope>
</reference>
<reference key="18">
    <citation type="journal article" date="2011" name="BMC Syst. Biol.">
        <title>Initial characterization of the human central proteome.</title>
        <authorList>
            <person name="Burkard T.R."/>
            <person name="Planyavsky M."/>
            <person name="Kaupe I."/>
            <person name="Breitwieser F.P."/>
            <person name="Buerckstuemmer T."/>
            <person name="Bennett K.L."/>
            <person name="Superti-Furga G."/>
            <person name="Colinge J."/>
        </authorList>
    </citation>
    <scope>IDENTIFICATION BY MASS SPECTROMETRY [LARGE SCALE ANALYSIS]</scope>
</reference>
<reference key="19">
    <citation type="journal article" date="2015" name="Cell">
        <title>A single kinase generates the majority of the secreted phosphoproteome.</title>
        <authorList>
            <person name="Tagliabracci V.S."/>
            <person name="Wiley S.E."/>
            <person name="Guo X."/>
            <person name="Kinch L.N."/>
            <person name="Durrant E."/>
            <person name="Wen J."/>
            <person name="Xiao J."/>
            <person name="Cui J."/>
            <person name="Nguyen K.B."/>
            <person name="Engel J.L."/>
            <person name="Coon J.J."/>
            <person name="Grishin N."/>
            <person name="Pinna L.A."/>
            <person name="Pagliarini D.J."/>
            <person name="Dixon J.E."/>
        </authorList>
    </citation>
    <scope>PHOSPHORYLATION AT SER-111; SER-115; SER-117; SER-344; SER-444 AND SER-445</scope>
</reference>
<gene>
    <name type="primary">AFP</name>
    <name type="synonym">HPAFP</name>
</gene>
<dbReference type="EMBL" id="V01514">
    <property type="protein sequence ID" value="CAA24758.1"/>
    <property type="molecule type" value="mRNA"/>
</dbReference>
<dbReference type="EMBL" id="M16110">
    <property type="protein sequence ID" value="AAB58754.1"/>
    <property type="molecule type" value="Genomic_DNA"/>
</dbReference>
<dbReference type="EMBL" id="AK314817">
    <property type="protein sequence ID" value="BAG37340.1"/>
    <property type="molecule type" value="mRNA"/>
</dbReference>
<dbReference type="EMBL" id="BC027881">
    <property type="protein sequence ID" value="AAH27881.1"/>
    <property type="molecule type" value="mRNA"/>
</dbReference>
<dbReference type="EMBL" id="M10949">
    <property type="protein sequence ID" value="AAA51674.1"/>
    <property type="molecule type" value="Genomic_DNA"/>
</dbReference>
<dbReference type="EMBL" id="M10950">
    <property type="protein sequence ID" value="AAA51675.1"/>
    <property type="molecule type" value="Genomic_DNA"/>
</dbReference>
<dbReference type="EMBL" id="Z19532">
    <property type="protein sequence ID" value="CAA79592.1"/>
    <property type="molecule type" value="Genomic_DNA"/>
</dbReference>
<dbReference type="CCDS" id="CCDS3556.1"/>
<dbReference type="PIR" id="A26624">
    <property type="entry name" value="FPHU"/>
</dbReference>
<dbReference type="RefSeq" id="NP_001125.1">
    <property type="nucleotide sequence ID" value="NM_001134.3"/>
</dbReference>
<dbReference type="PDB" id="3MRK">
    <property type="method" value="X-ray"/>
    <property type="resolution" value="1.40 A"/>
    <property type="chains" value="P=137-145"/>
</dbReference>
<dbReference type="PDB" id="7RE7">
    <property type="method" value="X-ray"/>
    <property type="resolution" value="2.55 A"/>
    <property type="chains" value="C/F=158-166"/>
</dbReference>
<dbReference type="PDB" id="7RE8">
    <property type="method" value="X-ray"/>
    <property type="resolution" value="2.82 A"/>
    <property type="chains" value="C/F=158-166"/>
</dbReference>
<dbReference type="PDB" id="7YIM">
    <property type="method" value="EM"/>
    <property type="resolution" value="2.60 A"/>
    <property type="chains" value="A=1-609"/>
</dbReference>
<dbReference type="PDB" id="8X1N">
    <property type="method" value="EM"/>
    <property type="resolution" value="3.31 A"/>
    <property type="chains" value="A=1-609"/>
</dbReference>
<dbReference type="PDBsum" id="3MRK"/>
<dbReference type="PDBsum" id="7RE7"/>
<dbReference type="PDBsum" id="7RE8"/>
<dbReference type="PDBsum" id="7YIM"/>
<dbReference type="PDBsum" id="8X1N"/>
<dbReference type="EMDB" id="EMD-33861"/>
<dbReference type="EMDB" id="EMD-37997"/>
<dbReference type="SMR" id="P02771"/>
<dbReference type="BioGRID" id="106682">
    <property type="interactions" value="27"/>
</dbReference>
<dbReference type="FunCoup" id="P02771">
    <property type="interactions" value="255"/>
</dbReference>
<dbReference type="IntAct" id="P02771">
    <property type="interactions" value="12"/>
</dbReference>
<dbReference type="STRING" id="9606.ENSP00000379138"/>
<dbReference type="ChEMBL" id="CHEMBL3712864"/>
<dbReference type="GlyConnect" id="41">
    <property type="glycosylation" value="31 N-Linked glycans (2 sites)"/>
</dbReference>
<dbReference type="GlyCosmos" id="P02771">
    <property type="glycosylation" value="2 sites, 48 glycans"/>
</dbReference>
<dbReference type="GlyGen" id="P02771">
    <property type="glycosylation" value="4 sites, 47 N-linked glycans (3 sites), 2 O-linked glycans (2 sites)"/>
</dbReference>
<dbReference type="iPTMnet" id="P02771"/>
<dbReference type="PhosphoSitePlus" id="P02771"/>
<dbReference type="BioMuta" id="AFP"/>
<dbReference type="DMDM" id="120042"/>
<dbReference type="jPOST" id="P02771"/>
<dbReference type="MassIVE" id="P02771"/>
<dbReference type="PaxDb" id="9606-ENSP00000379138"/>
<dbReference type="PeptideAtlas" id="P02771"/>
<dbReference type="ProteomicsDB" id="51589"/>
<dbReference type="TopDownProteomics" id="P02771"/>
<dbReference type="ABCD" id="P02771">
    <property type="antibodies" value="16 sequenced antibodies"/>
</dbReference>
<dbReference type="Antibodypedia" id="1359">
    <property type="antibodies" value="3616 antibodies from 59 providers"/>
</dbReference>
<dbReference type="DNASU" id="174"/>
<dbReference type="Ensembl" id="ENST00000395792.7">
    <property type="protein sequence ID" value="ENSP00000379138.2"/>
    <property type="gene ID" value="ENSG00000081051.8"/>
</dbReference>
<dbReference type="GeneID" id="174"/>
<dbReference type="KEGG" id="hsa:174"/>
<dbReference type="MANE-Select" id="ENST00000395792.7">
    <property type="protein sequence ID" value="ENSP00000379138.2"/>
    <property type="RefSeq nucleotide sequence ID" value="NM_001134.3"/>
    <property type="RefSeq protein sequence ID" value="NP_001125.1"/>
</dbReference>
<dbReference type="UCSC" id="uc003hgz.3">
    <property type="organism name" value="human"/>
</dbReference>
<dbReference type="AGR" id="HGNC:317"/>
<dbReference type="CTD" id="174"/>
<dbReference type="DisGeNET" id="174"/>
<dbReference type="GeneCards" id="AFP"/>
<dbReference type="HGNC" id="HGNC:317">
    <property type="gene designation" value="AFP"/>
</dbReference>
<dbReference type="HPA" id="ENSG00000081051">
    <property type="expression patterns" value="Tissue enriched (liver)"/>
</dbReference>
<dbReference type="MalaCards" id="AFP"/>
<dbReference type="MIM" id="104150">
    <property type="type" value="gene"/>
</dbReference>
<dbReference type="MIM" id="615969">
    <property type="type" value="phenotype"/>
</dbReference>
<dbReference type="MIM" id="615970">
    <property type="type" value="phenotype"/>
</dbReference>
<dbReference type="neXtProt" id="NX_P02771"/>
<dbReference type="OpenTargets" id="ENSG00000081051"/>
<dbReference type="Orphanet" id="168612">
    <property type="disease" value="Congenital deficiency in alpha-fetoprotein"/>
</dbReference>
<dbReference type="Orphanet" id="168615">
    <property type="disease" value="Hereditary persistence of alpha-fetoprotein"/>
</dbReference>
<dbReference type="PharmGKB" id="PA24614"/>
<dbReference type="VEuPathDB" id="HostDB:ENSG00000081051"/>
<dbReference type="eggNOG" id="ENOG502R7EA">
    <property type="taxonomic scope" value="Eukaryota"/>
</dbReference>
<dbReference type="GeneTree" id="ENSGT00390000000113"/>
<dbReference type="HOGENOM" id="CLU_030161_1_0_1"/>
<dbReference type="InParanoid" id="P02771"/>
<dbReference type="OMA" id="HEECCRG"/>
<dbReference type="OrthoDB" id="9875082at2759"/>
<dbReference type="PAN-GO" id="P02771">
    <property type="GO annotations" value="4 GO annotations based on evolutionary models"/>
</dbReference>
<dbReference type="PhylomeDB" id="P02771"/>
<dbReference type="TreeFam" id="TF335561"/>
<dbReference type="PathwayCommons" id="P02771"/>
<dbReference type="Reactome" id="R-HSA-381426">
    <property type="pathway name" value="Regulation of Insulin-like Growth Factor (IGF) transport and uptake by Insulin-like Growth Factor Binding Proteins (IGFBPs)"/>
</dbReference>
<dbReference type="Reactome" id="R-HSA-8957275">
    <property type="pathway name" value="Post-translational protein phosphorylation"/>
</dbReference>
<dbReference type="SignaLink" id="P02771"/>
<dbReference type="SIGNOR" id="P02771"/>
<dbReference type="BioGRID-ORCS" id="174">
    <property type="hits" value="14 hits in 1151 CRISPR screens"/>
</dbReference>
<dbReference type="ChiTaRS" id="AFP">
    <property type="organism name" value="human"/>
</dbReference>
<dbReference type="EvolutionaryTrace" id="P02771"/>
<dbReference type="GeneWiki" id="Alpha-fetoprotein"/>
<dbReference type="GenomeRNAi" id="174"/>
<dbReference type="Pharos" id="P02771">
    <property type="development level" value="Tbio"/>
</dbReference>
<dbReference type="PRO" id="PR:P02771"/>
<dbReference type="Proteomes" id="UP000005640">
    <property type="component" value="Chromosome 4"/>
</dbReference>
<dbReference type="RNAct" id="P02771">
    <property type="molecule type" value="protein"/>
</dbReference>
<dbReference type="Bgee" id="ENSG00000081051">
    <property type="expression patterns" value="Expressed in male germ line stem cell (sensu Vertebrata) in testis and 111 other cell types or tissues"/>
</dbReference>
<dbReference type="ExpressionAtlas" id="P02771">
    <property type="expression patterns" value="baseline and differential"/>
</dbReference>
<dbReference type="GO" id="GO:0005737">
    <property type="term" value="C:cytoplasm"/>
    <property type="evidence" value="ECO:0000318"/>
    <property type="project" value="GO_Central"/>
</dbReference>
<dbReference type="GO" id="GO:0005788">
    <property type="term" value="C:endoplasmic reticulum lumen"/>
    <property type="evidence" value="ECO:0000304"/>
    <property type="project" value="Reactome"/>
</dbReference>
<dbReference type="GO" id="GO:0005615">
    <property type="term" value="C:extracellular space"/>
    <property type="evidence" value="ECO:0007669"/>
    <property type="project" value="Ensembl"/>
</dbReference>
<dbReference type="GO" id="GO:0046872">
    <property type="term" value="F:metal ion binding"/>
    <property type="evidence" value="ECO:0007669"/>
    <property type="project" value="UniProtKB-KW"/>
</dbReference>
<dbReference type="GO" id="GO:0006915">
    <property type="term" value="P:apoptotic process"/>
    <property type="evidence" value="ECO:0007669"/>
    <property type="project" value="Ensembl"/>
</dbReference>
<dbReference type="GO" id="GO:0048872">
    <property type="term" value="P:homeostasis of number of cells"/>
    <property type="evidence" value="ECO:0007669"/>
    <property type="project" value="Ensembl"/>
</dbReference>
<dbReference type="GO" id="GO:0006955">
    <property type="term" value="P:immune response"/>
    <property type="evidence" value="ECO:0007669"/>
    <property type="project" value="Ensembl"/>
</dbReference>
<dbReference type="GO" id="GO:0001542">
    <property type="term" value="P:ovulation from ovarian follicle"/>
    <property type="evidence" value="ECO:0007669"/>
    <property type="project" value="Ensembl"/>
</dbReference>
<dbReference type="GO" id="GO:0042448">
    <property type="term" value="P:progesterone metabolic process"/>
    <property type="evidence" value="ECO:0007669"/>
    <property type="project" value="Ensembl"/>
</dbReference>
<dbReference type="CDD" id="cd00015">
    <property type="entry name" value="ALBUMIN"/>
    <property type="match status" value="3"/>
</dbReference>
<dbReference type="FunFam" id="1.10.246.10:FF:000001">
    <property type="entry name" value="Serum albumin"/>
    <property type="match status" value="3"/>
</dbReference>
<dbReference type="FunFam" id="1.10.246.10:FF:000002">
    <property type="entry name" value="Serum albumin"/>
    <property type="match status" value="2"/>
</dbReference>
<dbReference type="FunFam" id="1.10.246.10:FF:000004">
    <property type="entry name" value="Serum albumin"/>
    <property type="match status" value="1"/>
</dbReference>
<dbReference type="Gene3D" id="1.10.246.10">
    <property type="match status" value="6"/>
</dbReference>
<dbReference type="InterPro" id="IPR000264">
    <property type="entry name" value="ALB/AFP/VDB"/>
</dbReference>
<dbReference type="InterPro" id="IPR020858">
    <property type="entry name" value="Serum_albumin-like"/>
</dbReference>
<dbReference type="InterPro" id="IPR021177">
    <property type="entry name" value="Serum_albumin/AFP/Afamin"/>
</dbReference>
<dbReference type="InterPro" id="IPR020857">
    <property type="entry name" value="Serum_albumin_CS"/>
</dbReference>
<dbReference type="InterPro" id="IPR014760">
    <property type="entry name" value="Serum_albumin_N"/>
</dbReference>
<dbReference type="PANTHER" id="PTHR11385:SF7">
    <property type="entry name" value="ALPHA-FETOPROTEIN"/>
    <property type="match status" value="1"/>
</dbReference>
<dbReference type="PANTHER" id="PTHR11385">
    <property type="entry name" value="SERUM ALBUMIN-RELATED"/>
    <property type="match status" value="1"/>
</dbReference>
<dbReference type="Pfam" id="PF00273">
    <property type="entry name" value="Serum_albumin"/>
    <property type="match status" value="3"/>
</dbReference>
<dbReference type="PIRSF" id="PIRSF002520">
    <property type="entry name" value="Serum_albumin_subgroup"/>
    <property type="match status" value="1"/>
</dbReference>
<dbReference type="PRINTS" id="PR00803">
    <property type="entry name" value="AFETOPROTEIN"/>
</dbReference>
<dbReference type="PRINTS" id="PR00802">
    <property type="entry name" value="SERUMALBUMIN"/>
</dbReference>
<dbReference type="SMART" id="SM00103">
    <property type="entry name" value="ALBUMIN"/>
    <property type="match status" value="3"/>
</dbReference>
<dbReference type="SUPFAM" id="SSF48552">
    <property type="entry name" value="Serum albumin-like"/>
    <property type="match status" value="3"/>
</dbReference>
<dbReference type="PROSITE" id="PS00212">
    <property type="entry name" value="ALBUMIN_1"/>
    <property type="match status" value="2"/>
</dbReference>
<dbReference type="PROSITE" id="PS51438">
    <property type="entry name" value="ALBUMIN_2"/>
    <property type="match status" value="3"/>
</dbReference>
<feature type="signal peptide" evidence="4">
    <location>
        <begin position="1"/>
        <end position="18"/>
    </location>
</feature>
<feature type="chain" id="PRO_0000001097" description="Alpha-fetoprotein">
    <location>
        <begin position="19"/>
        <end position="609"/>
    </location>
</feature>
<feature type="domain" description="Albumin 1" evidence="1">
    <location>
        <begin position="19"/>
        <end position="210"/>
    </location>
</feature>
<feature type="domain" description="Albumin 2" evidence="1">
    <location>
        <begin position="211"/>
        <end position="402"/>
    </location>
</feature>
<feature type="domain" description="Albumin 3" evidence="1">
    <location>
        <begin position="403"/>
        <end position="601"/>
    </location>
</feature>
<feature type="binding site" evidence="9">
    <location>
        <position position="22"/>
    </location>
    <ligand>
        <name>Cu(2+)</name>
        <dbReference type="ChEBI" id="CHEBI:29036"/>
    </ligand>
</feature>
<feature type="modified residue" description="Phosphoserine; by FAM20C" evidence="7">
    <location>
        <position position="111"/>
    </location>
</feature>
<feature type="modified residue" description="Phosphoserine; by FAM20C" evidence="7">
    <location>
        <position position="115"/>
    </location>
</feature>
<feature type="modified residue" description="Phosphoserine; by FAM20C" evidence="7">
    <location>
        <position position="117"/>
    </location>
</feature>
<feature type="modified residue" description="Phosphoserine; by FAM20C" evidence="7">
    <location>
        <position position="344"/>
    </location>
</feature>
<feature type="modified residue" description="Phosphoserine; by FAM20C" evidence="7">
    <location>
        <position position="444"/>
    </location>
</feature>
<feature type="modified residue" description="Phosphoserine; by FAM20C" evidence="7">
    <location>
        <position position="445"/>
    </location>
</feature>
<feature type="glycosylation site" id="CAR_000070" description="N-linked (GlcNAc...) asparagine">
    <location>
        <position position="251"/>
    </location>
</feature>
<feature type="disulfide bond">
    <location>
        <begin position="99"/>
        <end position="114"/>
    </location>
</feature>
<feature type="disulfide bond">
    <location>
        <begin position="113"/>
        <end position="124"/>
    </location>
</feature>
<feature type="disulfide bond">
    <location>
        <begin position="148"/>
        <end position="193"/>
    </location>
</feature>
<feature type="disulfide bond">
    <location>
        <begin position="192"/>
        <end position="201"/>
    </location>
</feature>
<feature type="disulfide bond">
    <location>
        <begin position="224"/>
        <end position="270"/>
    </location>
</feature>
<feature type="disulfide bond">
    <location>
        <begin position="269"/>
        <end position="277"/>
    </location>
</feature>
<feature type="disulfide bond">
    <location>
        <begin position="289"/>
        <end position="303"/>
    </location>
</feature>
<feature type="disulfide bond">
    <location>
        <begin position="302"/>
        <end position="313"/>
    </location>
</feature>
<feature type="disulfide bond">
    <location>
        <begin position="384"/>
        <end position="393"/>
    </location>
</feature>
<feature type="disulfide bond">
    <location>
        <begin position="416"/>
        <end position="462"/>
    </location>
</feature>
<feature type="disulfide bond">
    <location>
        <begin position="461"/>
        <end position="472"/>
    </location>
</feature>
<feature type="disulfide bond">
    <location>
        <begin position="485"/>
        <end position="501"/>
    </location>
</feature>
<feature type="disulfide bond">
    <location>
        <begin position="500"/>
        <end position="511"/>
    </location>
</feature>
<feature type="disulfide bond">
    <location>
        <begin position="538"/>
        <end position="583"/>
    </location>
</feature>
<feature type="disulfide bond">
    <location>
        <begin position="582"/>
        <end position="591"/>
    </location>
</feature>
<feature type="sequence variant" id="VAR_033928" description="In dbSNP:rs35765619.">
    <original>K</original>
    <variation>Q</variation>
    <location>
        <position position="187"/>
    </location>
</feature>
<feature type="sequence variant" id="VAR_012049" description="In dbSNP:rs7790." evidence="2">
    <original>A</original>
    <variation>G</variation>
    <location>
        <position position="570"/>
    </location>
</feature>
<feature type="helix" evidence="10">
    <location>
        <begin position="31"/>
        <end position="33"/>
    </location>
</feature>
<feature type="helix" evidence="10">
    <location>
        <begin position="43"/>
        <end position="54"/>
    </location>
</feature>
<feature type="helix" evidence="10">
    <location>
        <begin position="60"/>
        <end position="74"/>
    </location>
</feature>
<feature type="helix" evidence="10">
    <location>
        <begin position="91"/>
        <end position="100"/>
    </location>
</feature>
<feature type="helix" evidence="10">
    <location>
        <begin position="102"/>
        <end position="107"/>
    </location>
</feature>
<feature type="helix" evidence="10">
    <location>
        <begin position="112"/>
        <end position="115"/>
    </location>
</feature>
<feature type="helix" evidence="10">
    <location>
        <begin position="118"/>
        <end position="127"/>
    </location>
</feature>
<feature type="helix" evidence="10">
    <location>
        <begin position="144"/>
        <end position="153"/>
    </location>
</feature>
<feature type="helix" evidence="10">
    <location>
        <begin position="155"/>
        <end position="167"/>
    </location>
</feature>
<feature type="strand" evidence="10">
    <location>
        <begin position="171"/>
        <end position="173"/>
    </location>
</feature>
<feature type="helix" evidence="10">
    <location>
        <begin position="175"/>
        <end position="192"/>
    </location>
</feature>
<feature type="helix" evidence="10">
    <location>
        <begin position="198"/>
        <end position="230"/>
    </location>
</feature>
<feature type="helix" evidence="10">
    <location>
        <begin position="232"/>
        <end position="246"/>
    </location>
</feature>
<feature type="helix" evidence="10">
    <location>
        <begin position="252"/>
        <end position="270"/>
    </location>
</feature>
<feature type="helix" evidence="10">
    <location>
        <begin position="274"/>
        <end position="289"/>
    </location>
</feature>
<feature type="turn" evidence="10">
    <location>
        <begin position="292"/>
        <end position="294"/>
    </location>
</feature>
<feature type="turn" evidence="10">
    <location>
        <begin position="299"/>
        <end position="301"/>
    </location>
</feature>
<feature type="helix" evidence="10">
    <location>
        <begin position="302"/>
        <end position="304"/>
    </location>
</feature>
<feature type="helix" evidence="10">
    <location>
        <begin position="307"/>
        <end position="316"/>
    </location>
</feature>
<feature type="strand" evidence="10">
    <location>
        <begin position="331"/>
        <end position="334"/>
    </location>
</feature>
<feature type="strand" evidence="10">
    <location>
        <begin position="339"/>
        <end position="341"/>
    </location>
</feature>
<feature type="helix" evidence="10">
    <location>
        <begin position="344"/>
        <end position="360"/>
    </location>
</feature>
<feature type="helix" evidence="10">
    <location>
        <begin position="367"/>
        <end position="384"/>
    </location>
</feature>
<feature type="helix" evidence="10">
    <location>
        <begin position="390"/>
        <end position="398"/>
    </location>
</feature>
<feature type="turn" evidence="10">
    <location>
        <begin position="399"/>
        <end position="402"/>
    </location>
</feature>
<feature type="helix" evidence="10">
    <location>
        <begin position="403"/>
        <end position="438"/>
    </location>
</feature>
<feature type="helix" evidence="10">
    <location>
        <begin position="444"/>
        <end position="461"/>
    </location>
</feature>
<feature type="strand" evidence="10">
    <location>
        <begin position="462"/>
        <end position="464"/>
    </location>
</feature>
<feature type="helix" evidence="10">
    <location>
        <begin position="468"/>
        <end position="490"/>
    </location>
</feature>
<feature type="helix" evidence="10">
    <location>
        <begin position="495"/>
        <end position="502"/>
    </location>
</feature>
<feature type="helix" evidence="10">
    <location>
        <begin position="508"/>
        <end position="513"/>
    </location>
</feature>
<feature type="helix" evidence="10">
    <location>
        <begin position="528"/>
        <end position="530"/>
    </location>
</feature>
<feature type="turn" evidence="10">
    <location>
        <begin position="535"/>
        <end position="539"/>
    </location>
</feature>
<feature type="helix" evidence="10">
    <location>
        <begin position="543"/>
        <end position="559"/>
    </location>
</feature>
<feature type="helix" evidence="10">
    <location>
        <begin position="566"/>
        <end position="581"/>
    </location>
</feature>
<feature type="strand" evidence="10">
    <location>
        <begin position="582"/>
        <end position="587"/>
    </location>
</feature>
<feature type="helix" evidence="10">
    <location>
        <begin position="588"/>
        <end position="607"/>
    </location>
</feature>
<organism>
    <name type="scientific">Homo sapiens</name>
    <name type="common">Human</name>
    <dbReference type="NCBI Taxonomy" id="9606"/>
    <lineage>
        <taxon>Eukaryota</taxon>
        <taxon>Metazoa</taxon>
        <taxon>Chordata</taxon>
        <taxon>Craniata</taxon>
        <taxon>Vertebrata</taxon>
        <taxon>Euteleostomi</taxon>
        <taxon>Mammalia</taxon>
        <taxon>Eutheria</taxon>
        <taxon>Euarchontoglires</taxon>
        <taxon>Primates</taxon>
        <taxon>Haplorrhini</taxon>
        <taxon>Catarrhini</taxon>
        <taxon>Hominidae</taxon>
        <taxon>Homo</taxon>
    </lineage>
</organism>
<sequence length="609" mass="68678">MKWVESIFLIFLLNFTESRTLHRNEYGIASILDSYQCTAEISLADLATIFFAQFVQEATYKEVSKMVKDALTAIEKPTGDEQSSGCLENQLPAFLEELCHEKEILEKYGHSDCCSQSEEGRHNCFLAHKKPTPASIPLFQVPEPVTSCEAYEEDRETFMNKFIYEIARRHPFLYAPTILLWAARYDKIIPSCCKAENAVECFQTKAATVTKELRESSLLNQHACAVMKNFGTRTFQAITVTKLSQKFTKVNFTEIQKLVLDVAHVHEHCCRGDVLDCLQDGEKIMSYICSQQDTLSNKITECCKLTTLERGQCIIHAENDEKPEGLSPNLNRFLGDRDFNQFSSGEKNIFLASFVHEYSRRHPQLAVSVILRVAKGYQELLEKCFQTENPLECQDKGEEELQKYIQESQALAKRSCGLFQKLGEYYLQNAFLVAYTKKAPQLTSSELMAITRKMAATAATCCQLSEDKLLACGEGAADIIIGHLCIRHEMTPVNPGVGQCCTSSYANRRPCFSSLVVDETYVPPAFSDDKFIFHKDLCQAQGVALQTMKQEFLINLVKQKPQITEEQLEAVIADFSGLLEKCCQGQEQEVCFAEEGQKLISKTRAALGV</sequence>
<name>FETA_HUMAN</name>
<protein>
    <recommendedName>
        <fullName>Alpha-fetoprotein</fullName>
    </recommendedName>
    <alternativeName>
        <fullName>Alpha-1-fetoprotein</fullName>
    </alternativeName>
    <alternativeName>
        <fullName>Alpha-fetoglobulin</fullName>
    </alternativeName>
</protein>
<evidence type="ECO:0000255" key="1">
    <source>
        <dbReference type="PROSITE-ProRule" id="PRU00769"/>
    </source>
</evidence>
<evidence type="ECO:0000269" key="2">
    <source>
    </source>
</evidence>
<evidence type="ECO:0000269" key="3">
    <source>
    </source>
</evidence>
<evidence type="ECO:0000269" key="4">
    <source>
    </source>
</evidence>
<evidence type="ECO:0000269" key="5">
    <source>
    </source>
</evidence>
<evidence type="ECO:0000269" key="6">
    <source>
    </source>
</evidence>
<evidence type="ECO:0000269" key="7">
    <source>
    </source>
</evidence>
<evidence type="ECO:0000269" key="8">
    <source>
    </source>
</evidence>
<evidence type="ECO:0000269" key="9">
    <source>
    </source>
</evidence>
<evidence type="ECO:0007829" key="10">
    <source>
        <dbReference type="PDB" id="7YIM"/>
    </source>
</evidence>
<comment type="function">
    <text>Binds copper, nickel, and fatty acids as well as, and bilirubin less well than, serum albumin. Only a small percentage (less than 2%) of the human AFP shows estrogen-binding properties.</text>
</comment>
<comment type="subunit">
    <text>Dimeric and trimeric forms have been found in addition to the monomeric form.</text>
</comment>
<comment type="interaction">
    <interactant intactId="EBI-722498">
        <id>P02771</id>
    </interactant>
    <interactant intactId="EBI-6901449">
        <id>PRO_0000045596</id>
        <dbReference type="UniProtKB" id="Q99IB8"/>
    </interactant>
    <organismsDiffer>true</organismsDiffer>
    <experiments>2</experiments>
</comment>
<comment type="subcellular location">
    <subcellularLocation>
        <location>Secreted</location>
    </subcellularLocation>
</comment>
<comment type="tissue specificity">
    <text>Plasma. Synthesized by the fetal liver and yolk sac.</text>
</comment>
<comment type="developmental stage">
    <text>Occurs in the plasma of fetuses more than 4 weeks old, reaches the highest levels during the 12th-16th week of gestation, and drops to trace amounts after birth. The serum level in adults is usually less than 40 ng/ml. AFP also occurs at high levels in the plasma and ascitic fluid of adults with hepatoma.</text>
</comment>
<comment type="PTM">
    <text>Independent studies suggest heterogeneity of the N-terminal sequence of the mature protein and of the cleavage site of the signal sequence.</text>
</comment>
<comment type="PTM">
    <text evidence="6">Sulfated.</text>
</comment>
<comment type="disease" evidence="3 5">
    <disease id="DI-04204">
        <name>Alpha-fetoprotein deficiency</name>
        <acronym>AFPD</acronym>
        <description>A benign condition characterized by undetectable AFP levels in the amniotic fluid. Affected individuals are asymptomatic and present normal development.</description>
        <dbReference type="MIM" id="615969"/>
    </disease>
    <text>The disease is caused by variants affecting the gene represented in this entry.</text>
</comment>
<comment type="disease" evidence="8">
    <disease id="DI-04205">
        <name>Alpha-fetoprotein, hereditary persistence</name>
        <acronym>HPAFP</acronym>
        <description>A benign autosomal dominant condition characterized by continued expression of alpha-fetoprotein in adult life.</description>
        <dbReference type="MIM" id="615970"/>
    </disease>
    <text>The disease is caused by variants affecting the gene represented in this entry.</text>
</comment>
<comment type="similarity">
    <text evidence="1">Belongs to the ALB/AFP/VDB family.</text>
</comment>
<comment type="online information" name="Wikipedia">
    <link uri="https://en.wikipedia.org/wiki/Alpha-fetoprotein"/>
    <text>Alpha-fetoprotein entry</text>
</comment>
<comment type="online information" name="Atlas of Genetics and Cytogenetics in Oncology and Haematology">
    <link uri="https://atlasgeneticsoncology.org/gene/44248/AFP"/>
</comment>
<keyword id="KW-0002">3D-structure</keyword>
<keyword id="KW-0186">Copper</keyword>
<keyword id="KW-0903">Direct protein sequencing</keyword>
<keyword id="KW-1015">Disulfide bond</keyword>
<keyword id="KW-0325">Glycoprotein</keyword>
<keyword id="KW-0479">Metal-binding</keyword>
<keyword id="KW-0533">Nickel</keyword>
<keyword id="KW-0597">Phosphoprotein</keyword>
<keyword id="KW-1267">Proteomics identification</keyword>
<keyword id="KW-1185">Reference proteome</keyword>
<keyword id="KW-0677">Repeat</keyword>
<keyword id="KW-0964">Secreted</keyword>
<keyword id="KW-0732">Signal</keyword>
<keyword id="KW-0765">Sulfation</keyword>